<dbReference type="EC" id="2.4.1.227" evidence="1"/>
<dbReference type="EMBL" id="CP000262">
    <property type="protein sequence ID" value="ABF38310.1"/>
    <property type="status" value="ALT_INIT"/>
    <property type="molecule type" value="Genomic_DNA"/>
</dbReference>
<dbReference type="SMR" id="Q1J5S6"/>
<dbReference type="CAZy" id="GT28">
    <property type="family name" value="Glycosyltransferase Family 28"/>
</dbReference>
<dbReference type="KEGG" id="spi:MGAS10750_Spy1360"/>
<dbReference type="HOGENOM" id="CLU_037404_0_0_9"/>
<dbReference type="UniPathway" id="UPA00219"/>
<dbReference type="Proteomes" id="UP000002434">
    <property type="component" value="Chromosome"/>
</dbReference>
<dbReference type="GO" id="GO:0005886">
    <property type="term" value="C:plasma membrane"/>
    <property type="evidence" value="ECO:0007669"/>
    <property type="project" value="UniProtKB-SubCell"/>
</dbReference>
<dbReference type="GO" id="GO:0050511">
    <property type="term" value="F:undecaprenyldiphospho-muramoylpentapeptide beta-N-acetylglucosaminyltransferase activity"/>
    <property type="evidence" value="ECO:0007669"/>
    <property type="project" value="UniProtKB-UniRule"/>
</dbReference>
<dbReference type="GO" id="GO:0005975">
    <property type="term" value="P:carbohydrate metabolic process"/>
    <property type="evidence" value="ECO:0007669"/>
    <property type="project" value="InterPro"/>
</dbReference>
<dbReference type="GO" id="GO:0051301">
    <property type="term" value="P:cell division"/>
    <property type="evidence" value="ECO:0007669"/>
    <property type="project" value="UniProtKB-KW"/>
</dbReference>
<dbReference type="GO" id="GO:0071555">
    <property type="term" value="P:cell wall organization"/>
    <property type="evidence" value="ECO:0007669"/>
    <property type="project" value="UniProtKB-KW"/>
</dbReference>
<dbReference type="GO" id="GO:0030259">
    <property type="term" value="P:lipid glycosylation"/>
    <property type="evidence" value="ECO:0007669"/>
    <property type="project" value="UniProtKB-UniRule"/>
</dbReference>
<dbReference type="GO" id="GO:0009252">
    <property type="term" value="P:peptidoglycan biosynthetic process"/>
    <property type="evidence" value="ECO:0007669"/>
    <property type="project" value="UniProtKB-UniRule"/>
</dbReference>
<dbReference type="GO" id="GO:0008360">
    <property type="term" value="P:regulation of cell shape"/>
    <property type="evidence" value="ECO:0007669"/>
    <property type="project" value="UniProtKB-KW"/>
</dbReference>
<dbReference type="CDD" id="cd03785">
    <property type="entry name" value="GT28_MurG"/>
    <property type="match status" value="1"/>
</dbReference>
<dbReference type="Gene3D" id="3.40.50.2000">
    <property type="entry name" value="Glycogen Phosphorylase B"/>
    <property type="match status" value="2"/>
</dbReference>
<dbReference type="HAMAP" id="MF_00033">
    <property type="entry name" value="MurG"/>
    <property type="match status" value="1"/>
</dbReference>
<dbReference type="InterPro" id="IPR006009">
    <property type="entry name" value="GlcNAc_MurG"/>
</dbReference>
<dbReference type="InterPro" id="IPR007235">
    <property type="entry name" value="Glyco_trans_28_C"/>
</dbReference>
<dbReference type="InterPro" id="IPR004276">
    <property type="entry name" value="GlycoTrans_28_N"/>
</dbReference>
<dbReference type="PANTHER" id="PTHR21015:SF27">
    <property type="entry name" value="UDP-N-ACETYLGLUCOSAMINE--N-ACETYLMURAMYL-(PENTAPEPTIDE) PYROPHOSPHORYL-UNDECAPRENOL N-ACETYLGLUCOSAMINE TRANSFERASE"/>
    <property type="match status" value="1"/>
</dbReference>
<dbReference type="PANTHER" id="PTHR21015">
    <property type="entry name" value="UDP-N-ACETYLGLUCOSAMINE--N-ACETYLMURAMYL-(PENTAPEPTIDE) PYROPHOSPHORYL-UNDECAPRENOL N-ACETYLGLUCOSAMINE TRANSFERASE 1"/>
    <property type="match status" value="1"/>
</dbReference>
<dbReference type="Pfam" id="PF04101">
    <property type="entry name" value="Glyco_tran_28_C"/>
    <property type="match status" value="1"/>
</dbReference>
<dbReference type="Pfam" id="PF03033">
    <property type="entry name" value="Glyco_transf_28"/>
    <property type="match status" value="1"/>
</dbReference>
<dbReference type="SUPFAM" id="SSF53756">
    <property type="entry name" value="UDP-Glycosyltransferase/glycogen phosphorylase"/>
    <property type="match status" value="1"/>
</dbReference>
<keyword id="KW-0131">Cell cycle</keyword>
<keyword id="KW-0132">Cell division</keyword>
<keyword id="KW-1003">Cell membrane</keyword>
<keyword id="KW-0133">Cell shape</keyword>
<keyword id="KW-0961">Cell wall biogenesis/degradation</keyword>
<keyword id="KW-0328">Glycosyltransferase</keyword>
<keyword id="KW-0472">Membrane</keyword>
<keyword id="KW-0573">Peptidoglycan synthesis</keyword>
<keyword id="KW-0808">Transferase</keyword>
<sequence>MPKKILFTGGGTVGHVTLNLILIPKFIKDGWEVHYIGDKNGIEHTEIEKSGLDVTFHAIATGKLRRYFSWQNLADVFKVALGLLQSLFIVAKLRPQALFSKGGFVSVPPVVAAKLLGKPVFIHESDRSMGLANKIAYKFATTMYTTFEQEDQLSKVKHLGAVTKVFKDTNQMPESTQLEAVKEYFSRDLKTLLFIGGSAGAHVFNQFISDHPELKQRYNIINITGDPHLNELSSHLYRVDYVTDLYQPLMAMADLVVTRGGSNTLFELLAMAKLHLIVPLGKEASRGDQLENATYFEKRGYAKQLQEPDLTLHNFDQAMADLFEHQADYEATMLATKEIQSPDFFYDLLRADISSAIKEK</sequence>
<feature type="chain" id="PRO_0000315180" description="UDP-N-acetylglucosamine--N-acetylmuramyl-(pentapeptide) pyrophosphoryl-undecaprenol N-acetylglucosamine transferase">
    <location>
        <begin position="1"/>
        <end position="360"/>
    </location>
</feature>
<feature type="binding site" evidence="1">
    <location>
        <position position="198"/>
    </location>
    <ligand>
        <name>UDP-N-acetyl-alpha-D-glucosamine</name>
        <dbReference type="ChEBI" id="CHEBI:57705"/>
    </ligand>
</feature>
<feature type="binding site" evidence="1">
    <location>
        <position position="289"/>
    </location>
    <ligand>
        <name>UDP-N-acetyl-alpha-D-glucosamine</name>
        <dbReference type="ChEBI" id="CHEBI:57705"/>
    </ligand>
</feature>
<name>MURG_STRPF</name>
<proteinExistence type="inferred from homology"/>
<reference key="1">
    <citation type="journal article" date="2006" name="Proc. Natl. Acad. Sci. U.S.A.">
        <title>Molecular genetic anatomy of inter- and intraserotype variation in the human bacterial pathogen group A Streptococcus.</title>
        <authorList>
            <person name="Beres S.B."/>
            <person name="Richter E.W."/>
            <person name="Nagiec M.J."/>
            <person name="Sumby P."/>
            <person name="Porcella S.F."/>
            <person name="DeLeo F.R."/>
            <person name="Musser J.M."/>
        </authorList>
    </citation>
    <scope>NUCLEOTIDE SEQUENCE [LARGE SCALE GENOMIC DNA]</scope>
    <source>
        <strain>MGAS10750</strain>
    </source>
</reference>
<accession>Q1J5S6</accession>
<organism>
    <name type="scientific">Streptococcus pyogenes serotype M4 (strain MGAS10750)</name>
    <dbReference type="NCBI Taxonomy" id="370554"/>
    <lineage>
        <taxon>Bacteria</taxon>
        <taxon>Bacillati</taxon>
        <taxon>Bacillota</taxon>
        <taxon>Bacilli</taxon>
        <taxon>Lactobacillales</taxon>
        <taxon>Streptococcaceae</taxon>
        <taxon>Streptococcus</taxon>
    </lineage>
</organism>
<gene>
    <name evidence="1" type="primary">murG</name>
    <name type="ordered locus">MGAS10750_Spy1360</name>
</gene>
<comment type="function">
    <text evidence="1">Cell wall formation. Catalyzes the transfer of a GlcNAc subunit on undecaprenyl-pyrophosphoryl-MurNAc-pentapeptide (lipid intermediate I) to form undecaprenyl-pyrophosphoryl-MurNAc-(pentapeptide)GlcNAc (lipid intermediate II).</text>
</comment>
<comment type="catalytic activity">
    <reaction evidence="1">
        <text>Mur2Ac(oyl-L-Ala-gamma-D-Glu-L-Lys-D-Ala-D-Ala)-di-trans,octa-cis-undecaprenyl diphosphate + UDP-N-acetyl-alpha-D-glucosamine = beta-D-GlcNAc-(1-&gt;4)-Mur2Ac(oyl-L-Ala-gamma-D-Glu-L-Lys-D-Ala-D-Ala)-di-trans,octa-cis-undecaprenyl diphosphate + UDP + H(+)</text>
        <dbReference type="Rhea" id="RHEA:23192"/>
        <dbReference type="ChEBI" id="CHEBI:15378"/>
        <dbReference type="ChEBI" id="CHEBI:57705"/>
        <dbReference type="ChEBI" id="CHEBI:58223"/>
        <dbReference type="ChEBI" id="CHEBI:60032"/>
        <dbReference type="ChEBI" id="CHEBI:60033"/>
        <dbReference type="EC" id="2.4.1.227"/>
    </reaction>
</comment>
<comment type="pathway">
    <text evidence="1">Cell wall biogenesis; peptidoglycan biosynthesis.</text>
</comment>
<comment type="subcellular location">
    <subcellularLocation>
        <location evidence="1">Cell membrane</location>
        <topology evidence="1">Peripheral membrane protein</topology>
        <orientation evidence="1">Cytoplasmic side</orientation>
    </subcellularLocation>
</comment>
<comment type="similarity">
    <text evidence="1">Belongs to the glycosyltransferase 28 family. MurG subfamily.</text>
</comment>
<comment type="sequence caution" evidence="2">
    <conflict type="erroneous initiation">
        <sequence resource="EMBL-CDS" id="ABF38310"/>
    </conflict>
</comment>
<evidence type="ECO:0000255" key="1">
    <source>
        <dbReference type="HAMAP-Rule" id="MF_00033"/>
    </source>
</evidence>
<evidence type="ECO:0000305" key="2"/>
<protein>
    <recommendedName>
        <fullName evidence="1">UDP-N-acetylglucosamine--N-acetylmuramyl-(pentapeptide) pyrophosphoryl-undecaprenol N-acetylglucosamine transferase</fullName>
        <ecNumber evidence="1">2.4.1.227</ecNumber>
    </recommendedName>
    <alternativeName>
        <fullName evidence="1">Undecaprenyl-PP-MurNAc-pentapeptide-UDPGlcNAc GlcNAc transferase</fullName>
    </alternativeName>
</protein>